<feature type="chain" id="PRO_0000230494" description="Small ribosomal subunit protein uS13">
    <location>
        <begin position="1"/>
        <end position="118"/>
    </location>
</feature>
<feature type="region of interest" description="Disordered" evidence="2">
    <location>
        <begin position="94"/>
        <end position="118"/>
    </location>
</feature>
<protein>
    <recommendedName>
        <fullName evidence="1">Small ribosomal subunit protein uS13</fullName>
    </recommendedName>
    <alternativeName>
        <fullName evidence="3">30S ribosomal protein S13</fullName>
    </alternativeName>
</protein>
<proteinExistence type="inferred from homology"/>
<keyword id="KW-0687">Ribonucleoprotein</keyword>
<keyword id="KW-0689">Ribosomal protein</keyword>
<keyword id="KW-0694">RNA-binding</keyword>
<keyword id="KW-0699">rRNA-binding</keyword>
<keyword id="KW-0820">tRNA-binding</keyword>
<accession>Q488Z1</accession>
<reference key="1">
    <citation type="journal article" date="2005" name="Proc. Natl. Acad. Sci. U.S.A.">
        <title>The psychrophilic lifestyle as revealed by the genome sequence of Colwellia psychrerythraea 34H through genomic and proteomic analyses.</title>
        <authorList>
            <person name="Methe B.A."/>
            <person name="Nelson K.E."/>
            <person name="Deming J.W."/>
            <person name="Momen B."/>
            <person name="Melamud E."/>
            <person name="Zhang X."/>
            <person name="Moult J."/>
            <person name="Madupu R."/>
            <person name="Nelson W.C."/>
            <person name="Dodson R.J."/>
            <person name="Brinkac L.M."/>
            <person name="Daugherty S.C."/>
            <person name="Durkin A.S."/>
            <person name="DeBoy R.T."/>
            <person name="Kolonay J.F."/>
            <person name="Sullivan S.A."/>
            <person name="Zhou L."/>
            <person name="Davidsen T.M."/>
            <person name="Wu M."/>
            <person name="Huston A.L."/>
            <person name="Lewis M."/>
            <person name="Weaver B."/>
            <person name="Weidman J.F."/>
            <person name="Khouri H."/>
            <person name="Utterback T.R."/>
            <person name="Feldblyum T.V."/>
            <person name="Fraser C.M."/>
        </authorList>
    </citation>
    <scope>NUCLEOTIDE SEQUENCE [LARGE SCALE GENOMIC DNA]</scope>
    <source>
        <strain>34H / ATCC BAA-681</strain>
    </source>
</reference>
<name>RS13_COLP3</name>
<comment type="function">
    <text evidence="1">Located at the top of the head of the 30S subunit, it contacts several helices of the 16S rRNA. In the 70S ribosome it contacts the 23S rRNA (bridge B1a) and protein L5 of the 50S subunit (bridge B1b), connecting the 2 subunits; these bridges are implicated in subunit movement. Contacts the tRNAs in the A and P-sites.</text>
</comment>
<comment type="subunit">
    <text evidence="1">Part of the 30S ribosomal subunit. Forms a loose heterodimer with protein S19. Forms two bridges to the 50S subunit in the 70S ribosome.</text>
</comment>
<comment type="similarity">
    <text evidence="1">Belongs to the universal ribosomal protein uS13 family.</text>
</comment>
<dbReference type="EMBL" id="CP000083">
    <property type="protein sequence ID" value="AAZ24238.1"/>
    <property type="molecule type" value="Genomic_DNA"/>
</dbReference>
<dbReference type="RefSeq" id="WP_011041473.1">
    <property type="nucleotide sequence ID" value="NC_003910.7"/>
</dbReference>
<dbReference type="SMR" id="Q488Z1"/>
<dbReference type="STRING" id="167879.CPS_0623"/>
<dbReference type="KEGG" id="cps:CPS_0623"/>
<dbReference type="eggNOG" id="COG0099">
    <property type="taxonomic scope" value="Bacteria"/>
</dbReference>
<dbReference type="HOGENOM" id="CLU_103849_1_2_6"/>
<dbReference type="Proteomes" id="UP000000547">
    <property type="component" value="Chromosome"/>
</dbReference>
<dbReference type="GO" id="GO:0005829">
    <property type="term" value="C:cytosol"/>
    <property type="evidence" value="ECO:0007669"/>
    <property type="project" value="TreeGrafter"/>
</dbReference>
<dbReference type="GO" id="GO:0015935">
    <property type="term" value="C:small ribosomal subunit"/>
    <property type="evidence" value="ECO:0007669"/>
    <property type="project" value="TreeGrafter"/>
</dbReference>
<dbReference type="GO" id="GO:0019843">
    <property type="term" value="F:rRNA binding"/>
    <property type="evidence" value="ECO:0007669"/>
    <property type="project" value="UniProtKB-UniRule"/>
</dbReference>
<dbReference type="GO" id="GO:0003735">
    <property type="term" value="F:structural constituent of ribosome"/>
    <property type="evidence" value="ECO:0007669"/>
    <property type="project" value="InterPro"/>
</dbReference>
<dbReference type="GO" id="GO:0000049">
    <property type="term" value="F:tRNA binding"/>
    <property type="evidence" value="ECO:0007669"/>
    <property type="project" value="UniProtKB-UniRule"/>
</dbReference>
<dbReference type="GO" id="GO:0006412">
    <property type="term" value="P:translation"/>
    <property type="evidence" value="ECO:0007669"/>
    <property type="project" value="UniProtKB-UniRule"/>
</dbReference>
<dbReference type="FunFam" id="1.10.8.50:FF:000001">
    <property type="entry name" value="30S ribosomal protein S13"/>
    <property type="match status" value="1"/>
</dbReference>
<dbReference type="FunFam" id="4.10.910.10:FF:000001">
    <property type="entry name" value="30S ribosomal protein S13"/>
    <property type="match status" value="1"/>
</dbReference>
<dbReference type="Gene3D" id="1.10.8.50">
    <property type="match status" value="1"/>
</dbReference>
<dbReference type="Gene3D" id="4.10.910.10">
    <property type="entry name" value="30s ribosomal protein s13, domain 2"/>
    <property type="match status" value="1"/>
</dbReference>
<dbReference type="HAMAP" id="MF_01315">
    <property type="entry name" value="Ribosomal_uS13"/>
    <property type="match status" value="1"/>
</dbReference>
<dbReference type="InterPro" id="IPR027437">
    <property type="entry name" value="Rbsml_uS13_C"/>
</dbReference>
<dbReference type="InterPro" id="IPR001892">
    <property type="entry name" value="Ribosomal_uS13"/>
</dbReference>
<dbReference type="InterPro" id="IPR010979">
    <property type="entry name" value="Ribosomal_uS13-like_H2TH"/>
</dbReference>
<dbReference type="InterPro" id="IPR019980">
    <property type="entry name" value="Ribosomal_uS13_bac-type"/>
</dbReference>
<dbReference type="InterPro" id="IPR018269">
    <property type="entry name" value="Ribosomal_uS13_CS"/>
</dbReference>
<dbReference type="NCBIfam" id="TIGR03631">
    <property type="entry name" value="uS13_bact"/>
    <property type="match status" value="1"/>
</dbReference>
<dbReference type="PANTHER" id="PTHR10871">
    <property type="entry name" value="30S RIBOSOMAL PROTEIN S13/40S RIBOSOMAL PROTEIN S18"/>
    <property type="match status" value="1"/>
</dbReference>
<dbReference type="PANTHER" id="PTHR10871:SF1">
    <property type="entry name" value="SMALL RIBOSOMAL SUBUNIT PROTEIN US13M"/>
    <property type="match status" value="1"/>
</dbReference>
<dbReference type="Pfam" id="PF00416">
    <property type="entry name" value="Ribosomal_S13"/>
    <property type="match status" value="1"/>
</dbReference>
<dbReference type="PIRSF" id="PIRSF002134">
    <property type="entry name" value="Ribosomal_S13"/>
    <property type="match status" value="1"/>
</dbReference>
<dbReference type="SUPFAM" id="SSF46946">
    <property type="entry name" value="S13-like H2TH domain"/>
    <property type="match status" value="1"/>
</dbReference>
<dbReference type="PROSITE" id="PS00646">
    <property type="entry name" value="RIBOSOMAL_S13_1"/>
    <property type="match status" value="1"/>
</dbReference>
<dbReference type="PROSITE" id="PS50159">
    <property type="entry name" value="RIBOSOMAL_S13_2"/>
    <property type="match status" value="1"/>
</dbReference>
<sequence>MARIAGINIPDRKHAVIAITAIYGIGATRAKAICAATGIAESTKISELDEAKIDLLRAEVDKFTVEGDLRREVSMNIKRLMDLGCYRGIRHRRSLPLRGQRTKTNARTRKGPRKPIKK</sequence>
<evidence type="ECO:0000255" key="1">
    <source>
        <dbReference type="HAMAP-Rule" id="MF_01315"/>
    </source>
</evidence>
<evidence type="ECO:0000256" key="2">
    <source>
        <dbReference type="SAM" id="MobiDB-lite"/>
    </source>
</evidence>
<evidence type="ECO:0000305" key="3"/>
<organism>
    <name type="scientific">Colwellia psychrerythraea (strain 34H / ATCC BAA-681)</name>
    <name type="common">Vibrio psychroerythus</name>
    <dbReference type="NCBI Taxonomy" id="167879"/>
    <lineage>
        <taxon>Bacteria</taxon>
        <taxon>Pseudomonadati</taxon>
        <taxon>Pseudomonadota</taxon>
        <taxon>Gammaproteobacteria</taxon>
        <taxon>Alteromonadales</taxon>
        <taxon>Colwelliaceae</taxon>
        <taxon>Colwellia</taxon>
    </lineage>
</organism>
<gene>
    <name evidence="1" type="primary">rpsM</name>
    <name type="ordered locus">CPS_0623</name>
</gene>